<evidence type="ECO:0000255" key="1"/>
<evidence type="ECO:0000255" key="2">
    <source>
        <dbReference type="PROSITE-ProRule" id="PRU00116"/>
    </source>
</evidence>
<evidence type="ECO:0000255" key="3">
    <source>
        <dbReference type="PROSITE-ProRule" id="PRU00782"/>
    </source>
</evidence>
<evidence type="ECO:0000255" key="4">
    <source>
        <dbReference type="PROSITE-ProRule" id="PRU01093"/>
    </source>
</evidence>
<evidence type="ECO:0000305" key="5"/>
<reference key="1">
    <citation type="journal article" date="2005" name="Nature">
        <title>The genome of the social amoeba Dictyostelium discoideum.</title>
        <authorList>
            <person name="Eichinger L."/>
            <person name="Pachebat J.A."/>
            <person name="Gloeckner G."/>
            <person name="Rajandream M.A."/>
            <person name="Sucgang R."/>
            <person name="Berriman M."/>
            <person name="Song J."/>
            <person name="Olsen R."/>
            <person name="Szafranski K."/>
            <person name="Xu Q."/>
            <person name="Tunggal B."/>
            <person name="Kummerfeld S."/>
            <person name="Madera M."/>
            <person name="Konfortov B.A."/>
            <person name="Rivero F."/>
            <person name="Bankier A.T."/>
            <person name="Lehmann R."/>
            <person name="Hamlin N."/>
            <person name="Davies R."/>
            <person name="Gaudet P."/>
            <person name="Fey P."/>
            <person name="Pilcher K."/>
            <person name="Chen G."/>
            <person name="Saunders D."/>
            <person name="Sodergren E.J."/>
            <person name="Davis P."/>
            <person name="Kerhornou A."/>
            <person name="Nie X."/>
            <person name="Hall N."/>
            <person name="Anjard C."/>
            <person name="Hemphill L."/>
            <person name="Bason N."/>
            <person name="Farbrother P."/>
            <person name="Desany B."/>
            <person name="Just E."/>
            <person name="Morio T."/>
            <person name="Rost R."/>
            <person name="Churcher C.M."/>
            <person name="Cooper J."/>
            <person name="Haydock S."/>
            <person name="van Driessche N."/>
            <person name="Cronin A."/>
            <person name="Goodhead I."/>
            <person name="Muzny D.M."/>
            <person name="Mourier T."/>
            <person name="Pain A."/>
            <person name="Lu M."/>
            <person name="Harper D."/>
            <person name="Lindsay R."/>
            <person name="Hauser H."/>
            <person name="James K.D."/>
            <person name="Quiles M."/>
            <person name="Madan Babu M."/>
            <person name="Saito T."/>
            <person name="Buchrieser C."/>
            <person name="Wardroper A."/>
            <person name="Felder M."/>
            <person name="Thangavelu M."/>
            <person name="Johnson D."/>
            <person name="Knights A."/>
            <person name="Loulseged H."/>
            <person name="Mungall K.L."/>
            <person name="Oliver K."/>
            <person name="Price C."/>
            <person name="Quail M.A."/>
            <person name="Urushihara H."/>
            <person name="Hernandez J."/>
            <person name="Rabbinowitsch E."/>
            <person name="Steffen D."/>
            <person name="Sanders M."/>
            <person name="Ma J."/>
            <person name="Kohara Y."/>
            <person name="Sharp S."/>
            <person name="Simmonds M.N."/>
            <person name="Spiegler S."/>
            <person name="Tivey A."/>
            <person name="Sugano S."/>
            <person name="White B."/>
            <person name="Walker D."/>
            <person name="Woodward J.R."/>
            <person name="Winckler T."/>
            <person name="Tanaka Y."/>
            <person name="Shaulsky G."/>
            <person name="Schleicher M."/>
            <person name="Weinstock G.M."/>
            <person name="Rosenthal A."/>
            <person name="Cox E.C."/>
            <person name="Chisholm R.L."/>
            <person name="Gibbs R.A."/>
            <person name="Loomis W.F."/>
            <person name="Platzer M."/>
            <person name="Kay R.R."/>
            <person name="Williams J.G."/>
            <person name="Dear P.H."/>
            <person name="Noegel A.A."/>
            <person name="Barrell B.G."/>
            <person name="Kuspa A."/>
        </authorList>
    </citation>
    <scope>NUCLEOTIDE SEQUENCE [LARGE SCALE GENOMIC DNA]</scope>
    <source>
        <strain>AX4</strain>
    </source>
</reference>
<reference key="2">
    <citation type="journal article" date="1994" name="Proc. Natl. Acad. Sci. U.S.A.">
        <title>Discovery of myosin genes by physical mapping in Dictyostelium.</title>
        <authorList>
            <person name="Titus M.A."/>
            <person name="Kuspa A."/>
            <person name="Loomis W.F."/>
        </authorList>
    </citation>
    <scope>NUCLEOTIDE SEQUENCE [GENOMIC DNA] OF 143-228</scope>
</reference>
<reference key="3">
    <citation type="journal article" date="2006" name="BMC Genomics">
        <title>Thirteen is enough: the myosins of Dictyostelium discoideum and their light chains.</title>
        <authorList>
            <person name="Kollmar M."/>
        </authorList>
    </citation>
    <scope>NOMENCLATURE</scope>
</reference>
<keyword id="KW-0009">Actin-binding</keyword>
<keyword id="KW-0067">ATP-binding</keyword>
<keyword id="KW-0112">Calmodulin-binding</keyword>
<keyword id="KW-0505">Motor protein</keyword>
<keyword id="KW-0518">Myosin</keyword>
<keyword id="KW-0547">Nucleotide-binding</keyword>
<keyword id="KW-1185">Reference proteome</keyword>
<feature type="chain" id="PRO_0000123370" description="Myosin IF heavy chain">
    <location>
        <begin position="1"/>
        <end position="1071"/>
    </location>
</feature>
<feature type="domain" description="Myosin motor" evidence="3">
    <location>
        <begin position="40"/>
        <end position="736"/>
    </location>
</feature>
<feature type="domain" description="IQ" evidence="2">
    <location>
        <begin position="739"/>
        <end position="768"/>
    </location>
</feature>
<feature type="domain" description="TH1" evidence="4">
    <location>
        <begin position="870"/>
        <end position="1069"/>
    </location>
</feature>
<feature type="region of interest" description="Actin-binding" evidence="3">
    <location>
        <begin position="610"/>
        <end position="632"/>
    </location>
</feature>
<feature type="binding site" evidence="1">
    <location>
        <begin position="134"/>
        <end position="141"/>
    </location>
    <ligand>
        <name>ATP</name>
        <dbReference type="ChEBI" id="CHEBI:30616"/>
    </ligand>
</feature>
<feature type="sequence conflict" description="In Ref. 2; AAA61401." evidence="5" ref="2">
    <original>NI</original>
    <variation>DV</variation>
    <location>
        <begin position="173"/>
        <end position="174"/>
    </location>
</feature>
<gene>
    <name type="primary">myoF</name>
    <name type="ORF">DDB_G0289177</name>
</gene>
<sequence length="1071" mass="124048">MEPLPLENEDNQLNSNKSTTVSSKNFSNIFHNNIHNKDVVGLTDMCFLENVEENELMNNLQNRFNKDHIYTYIGEQVISVNPFSNKANIYTEQVLKSYQNMYMYEVSPHIYALAQDTYKKLLLSKESQCVIITGESGSGKTEASKIFLNYISKVCSGNLENIQGIMRLIIESNIVLESFGNAKTLRNDNSSRFGKFIEIEFDGKGSPISGKISQFLLEKSRVHSRAIGERSFHVFYQFLTDKRITSKLGLSNDPTQYKYLKDSMCFSISSINDSKDFQKVLESLKQLAWTEQEMESIWRVLGAILLIGNIEFSNDVEKSNVDAVYISTPETLKKVSQLLQCSEDSLEKSLISRSLTLGAGKRQSSIKVLLNQTQAKETRDAFSKVLYDRLFTSIIDKINSTISSKSNNGSNYIIESTIGILDIYGFEIFENNSFEQFIINYSNEKLQQLFINLVLRQEQEEYLKEGIEWKTIDNYFDNTPIIDLIEGQPVGLLKLLEEACLIGQSTPELLIQKFNQFFSKNKHFESFETSNNLSIESQSFTLKHYASPVTYNLDSFIYKNKDPLYQDLIFTMESSKDKFILSLFNKDFQKNSLGVKKIPITAATQFKNAINDLIGKLNTCQPHYIRCIKSNEDKRSNHFDYEAVRHQVRYLNMLETIRVRKAGYCHKQHYTRFLGRYKMISKETWPFWNGTPKDGVMAIVRAASAIQNSTSECQFGKKKLFIKSASTLFHFEELRQKILPSIVITIQRVWRGYKVRKWYKQELQRLREEKEEIQKQIKRKNSANLIQTYYLRYKVLTYIKKLKPWSVGPHYNKGHIMPTLWLRRTPIDSLMQSIHIIWWAKVKVTSLSMEARSLVRQKILALDLFGMGYSRKKEWDCRRKFQADYLSDDSNPKKSQFSESVQAMFQKGGDKEILFADNVIKINKRGKSQLRSLIITDQHIYKYDTKKYTQKKVGLKLHSIVALSTSNKKDTFLAIHFKQPIRDLYIDLGCDFVEKVSEVCTNLVQQVYKLTGTTIPLVFRDPLTFNNSRDSRNNGTDFVVSFSQYPKGKEQRQSTFVKGKGNTAIVYYNLD</sequence>
<name>MYOF_DICDI</name>
<protein>
    <recommendedName>
        <fullName>Myosin IF heavy chain</fullName>
    </recommendedName>
</protein>
<organism>
    <name type="scientific">Dictyostelium discoideum</name>
    <name type="common">Social amoeba</name>
    <dbReference type="NCBI Taxonomy" id="44689"/>
    <lineage>
        <taxon>Eukaryota</taxon>
        <taxon>Amoebozoa</taxon>
        <taxon>Evosea</taxon>
        <taxon>Eumycetozoa</taxon>
        <taxon>Dictyostelia</taxon>
        <taxon>Dictyosteliales</taxon>
        <taxon>Dictyosteliaceae</taxon>
        <taxon>Dictyostelium</taxon>
    </lineage>
</organism>
<comment type="function">
    <text>Myosin is a protein that binds to actin and has ATPase activity that is activated by actin.</text>
</comment>
<comment type="subunit">
    <text>Myosin I heavy chain is single-headed. Dimer of a heavy and a light chain. Inability to self-assemble into filaments.</text>
</comment>
<comment type="similarity">
    <text evidence="5">Belongs to the TRAFAC class myosin-kinesin ATPase superfamily. Myosin family.</text>
</comment>
<dbReference type="EMBL" id="AAFI02000131">
    <property type="protein sequence ID" value="EAL62822.1"/>
    <property type="molecule type" value="Genomic_DNA"/>
</dbReference>
<dbReference type="EMBL" id="L35319">
    <property type="protein sequence ID" value="AAA61401.1"/>
    <property type="molecule type" value="Genomic_DNA"/>
</dbReference>
<dbReference type="RefSeq" id="XP_636359.1">
    <property type="nucleotide sequence ID" value="XM_631267.1"/>
</dbReference>
<dbReference type="SMR" id="P54695"/>
<dbReference type="FunCoup" id="P54695">
    <property type="interactions" value="21"/>
</dbReference>
<dbReference type="PaxDb" id="44689-DDB0220021"/>
<dbReference type="EnsemblProtists" id="EAL62822">
    <property type="protein sequence ID" value="EAL62822"/>
    <property type="gene ID" value="DDB_G0289177"/>
</dbReference>
<dbReference type="GeneID" id="8627032"/>
<dbReference type="KEGG" id="ddi:DDB_G0289177"/>
<dbReference type="dictyBase" id="DDB_G0289177">
    <property type="gene designation" value="myoF"/>
</dbReference>
<dbReference type="VEuPathDB" id="AmoebaDB:DDB_G0289177"/>
<dbReference type="eggNOG" id="KOG0164">
    <property type="taxonomic scope" value="Eukaryota"/>
</dbReference>
<dbReference type="HOGENOM" id="CLU_000192_7_7_1"/>
<dbReference type="InParanoid" id="P54695"/>
<dbReference type="OMA" id="RKKEWDC"/>
<dbReference type="PhylomeDB" id="P54695"/>
<dbReference type="PRO" id="PR:P54695"/>
<dbReference type="Proteomes" id="UP000002195">
    <property type="component" value="Chromosome 5"/>
</dbReference>
<dbReference type="GO" id="GO:0015629">
    <property type="term" value="C:actin cytoskeleton"/>
    <property type="evidence" value="ECO:0000318"/>
    <property type="project" value="GO_Central"/>
</dbReference>
<dbReference type="GO" id="GO:0062201">
    <property type="term" value="C:actin wave"/>
    <property type="evidence" value="ECO:0000314"/>
    <property type="project" value="dictyBase"/>
</dbReference>
<dbReference type="GO" id="GO:0031252">
    <property type="term" value="C:cell leading edge"/>
    <property type="evidence" value="ECO:0000314"/>
    <property type="project" value="dictyBase"/>
</dbReference>
<dbReference type="GO" id="GO:0005911">
    <property type="term" value="C:cell-cell junction"/>
    <property type="evidence" value="ECO:0000314"/>
    <property type="project" value="dictyBase"/>
</dbReference>
<dbReference type="GO" id="GO:0005737">
    <property type="term" value="C:cytoplasm"/>
    <property type="evidence" value="ECO:0000318"/>
    <property type="project" value="GO_Central"/>
</dbReference>
<dbReference type="GO" id="GO:0070685">
    <property type="term" value="C:macropinocytic cup"/>
    <property type="evidence" value="ECO:0000314"/>
    <property type="project" value="dictyBase"/>
</dbReference>
<dbReference type="GO" id="GO:0070687">
    <property type="term" value="C:macropinocytic cup cytoskeleton"/>
    <property type="evidence" value="ECO:0000314"/>
    <property type="project" value="dictyBase"/>
</dbReference>
<dbReference type="GO" id="GO:0016459">
    <property type="term" value="C:myosin complex"/>
    <property type="evidence" value="ECO:0007669"/>
    <property type="project" value="UniProtKB-KW"/>
</dbReference>
<dbReference type="GO" id="GO:0005886">
    <property type="term" value="C:plasma membrane"/>
    <property type="evidence" value="ECO:0000314"/>
    <property type="project" value="dictyBase"/>
</dbReference>
<dbReference type="GO" id="GO:0031143">
    <property type="term" value="C:pseudopodium"/>
    <property type="evidence" value="ECO:0000314"/>
    <property type="project" value="dictyBase"/>
</dbReference>
<dbReference type="GO" id="GO:0051015">
    <property type="term" value="F:actin filament binding"/>
    <property type="evidence" value="ECO:0000318"/>
    <property type="project" value="GO_Central"/>
</dbReference>
<dbReference type="GO" id="GO:0005524">
    <property type="term" value="F:ATP binding"/>
    <property type="evidence" value="ECO:0007669"/>
    <property type="project" value="UniProtKB-KW"/>
</dbReference>
<dbReference type="GO" id="GO:0005516">
    <property type="term" value="F:calmodulin binding"/>
    <property type="evidence" value="ECO:0007669"/>
    <property type="project" value="UniProtKB-KW"/>
</dbReference>
<dbReference type="GO" id="GO:0000146">
    <property type="term" value="F:microfilament motor activity"/>
    <property type="evidence" value="ECO:0000318"/>
    <property type="project" value="GO_Central"/>
</dbReference>
<dbReference type="GO" id="GO:0005547">
    <property type="term" value="F:phosphatidylinositol-3,4,5-trisphosphate binding"/>
    <property type="evidence" value="ECO:0000314"/>
    <property type="project" value="dictyBase"/>
</dbReference>
<dbReference type="GO" id="GO:0007015">
    <property type="term" value="P:actin filament organization"/>
    <property type="evidence" value="ECO:0000318"/>
    <property type="project" value="GO_Central"/>
</dbReference>
<dbReference type="GO" id="GO:0030041">
    <property type="term" value="P:actin filament polymerization"/>
    <property type="evidence" value="ECO:0000316"/>
    <property type="project" value="dictyBase"/>
</dbReference>
<dbReference type="GO" id="GO:0030048">
    <property type="term" value="P:actin filament-based movement"/>
    <property type="evidence" value="ECO:0000318"/>
    <property type="project" value="GO_Central"/>
</dbReference>
<dbReference type="GO" id="GO:0031152">
    <property type="term" value="P:aggregation involved in sorocarp development"/>
    <property type="evidence" value="ECO:0000316"/>
    <property type="project" value="dictyBase"/>
</dbReference>
<dbReference type="GO" id="GO:0048870">
    <property type="term" value="P:cell motility"/>
    <property type="evidence" value="ECO:0000315"/>
    <property type="project" value="dictyBase"/>
</dbReference>
<dbReference type="GO" id="GO:0043327">
    <property type="term" value="P:chemotaxis to cAMP"/>
    <property type="evidence" value="ECO:0000316"/>
    <property type="project" value="dictyBase"/>
</dbReference>
<dbReference type="GO" id="GO:0006897">
    <property type="term" value="P:endocytosis"/>
    <property type="evidence" value="ECO:0000318"/>
    <property type="project" value="GO_Central"/>
</dbReference>
<dbReference type="GO" id="GO:0120320">
    <property type="term" value="P:lateral pseudopodium retraction"/>
    <property type="evidence" value="ECO:0000315"/>
    <property type="project" value="dictyBase"/>
</dbReference>
<dbReference type="GO" id="GO:0030011">
    <property type="term" value="P:maintenance of cell polarity"/>
    <property type="evidence" value="ECO:0000315"/>
    <property type="project" value="dictyBase"/>
</dbReference>
<dbReference type="GO" id="GO:0006911">
    <property type="term" value="P:phagocytosis, engulfment"/>
    <property type="evidence" value="ECO:0000316"/>
    <property type="project" value="dictyBase"/>
</dbReference>
<dbReference type="CDD" id="cd23767">
    <property type="entry name" value="IQCD"/>
    <property type="match status" value="1"/>
</dbReference>
<dbReference type="CDD" id="cd01378">
    <property type="entry name" value="MYSc_Myo1"/>
    <property type="match status" value="1"/>
</dbReference>
<dbReference type="FunFam" id="1.10.10.820:FF:000001">
    <property type="entry name" value="Myosin heavy chain"/>
    <property type="match status" value="1"/>
</dbReference>
<dbReference type="FunFam" id="1.20.58.530:FF:000004">
    <property type="entry name" value="Unconventional myosin ID"/>
    <property type="match status" value="1"/>
</dbReference>
<dbReference type="Gene3D" id="1.10.10.820">
    <property type="match status" value="1"/>
</dbReference>
<dbReference type="Gene3D" id="1.20.5.190">
    <property type="match status" value="1"/>
</dbReference>
<dbReference type="Gene3D" id="1.20.58.530">
    <property type="match status" value="1"/>
</dbReference>
<dbReference type="Gene3D" id="6.20.240.20">
    <property type="match status" value="1"/>
</dbReference>
<dbReference type="Gene3D" id="3.40.850.10">
    <property type="entry name" value="Kinesin motor domain"/>
    <property type="match status" value="1"/>
</dbReference>
<dbReference type="Gene3D" id="1.20.120.720">
    <property type="entry name" value="Myosin VI head, motor domain, U50 subdomain"/>
    <property type="match status" value="1"/>
</dbReference>
<dbReference type="InterPro" id="IPR000048">
    <property type="entry name" value="IQ_motif_EF-hand-BS"/>
</dbReference>
<dbReference type="InterPro" id="IPR036961">
    <property type="entry name" value="Kinesin_motor_dom_sf"/>
</dbReference>
<dbReference type="InterPro" id="IPR001609">
    <property type="entry name" value="Myosin_head_motor_dom-like"/>
</dbReference>
<dbReference type="InterPro" id="IPR010926">
    <property type="entry name" value="Myosin_TH1"/>
</dbReference>
<dbReference type="InterPro" id="IPR036072">
    <property type="entry name" value="MYSc_Myo1"/>
</dbReference>
<dbReference type="InterPro" id="IPR027417">
    <property type="entry name" value="P-loop_NTPase"/>
</dbReference>
<dbReference type="PANTHER" id="PTHR13140">
    <property type="entry name" value="MYOSIN"/>
    <property type="match status" value="1"/>
</dbReference>
<dbReference type="PANTHER" id="PTHR13140:SF519">
    <property type="entry name" value="MYOSIN IF HEAVY CHAIN"/>
    <property type="match status" value="1"/>
</dbReference>
<dbReference type="Pfam" id="PF00612">
    <property type="entry name" value="IQ"/>
    <property type="match status" value="1"/>
</dbReference>
<dbReference type="Pfam" id="PF00063">
    <property type="entry name" value="Myosin_head"/>
    <property type="match status" value="1"/>
</dbReference>
<dbReference type="Pfam" id="PF06017">
    <property type="entry name" value="Myosin_TH1"/>
    <property type="match status" value="1"/>
</dbReference>
<dbReference type="PRINTS" id="PR00193">
    <property type="entry name" value="MYOSINHEAVY"/>
</dbReference>
<dbReference type="SMART" id="SM00015">
    <property type="entry name" value="IQ"/>
    <property type="match status" value="1"/>
</dbReference>
<dbReference type="SMART" id="SM00242">
    <property type="entry name" value="MYSc"/>
    <property type="match status" value="1"/>
</dbReference>
<dbReference type="SUPFAM" id="SSF52540">
    <property type="entry name" value="P-loop containing nucleoside triphosphate hydrolases"/>
    <property type="match status" value="1"/>
</dbReference>
<dbReference type="PROSITE" id="PS50096">
    <property type="entry name" value="IQ"/>
    <property type="match status" value="1"/>
</dbReference>
<dbReference type="PROSITE" id="PS51456">
    <property type="entry name" value="MYOSIN_MOTOR"/>
    <property type="match status" value="1"/>
</dbReference>
<dbReference type="PROSITE" id="PS51757">
    <property type="entry name" value="TH1"/>
    <property type="match status" value="1"/>
</dbReference>
<accession>P54695</accession>
<accession>Q54HT0</accession>
<proteinExistence type="inferred from homology"/>